<sequence>MLILTRRVGETLMVGDDVTVTVLGVKGNQVRIGVNAPKEVAVHREEIYQRIQKEKDQEPNH</sequence>
<organism>
    <name type="scientific">Pseudomonas aeruginosa (strain LESB58)</name>
    <dbReference type="NCBI Taxonomy" id="557722"/>
    <lineage>
        <taxon>Bacteria</taxon>
        <taxon>Pseudomonadati</taxon>
        <taxon>Pseudomonadota</taxon>
        <taxon>Gammaproteobacteria</taxon>
        <taxon>Pseudomonadales</taxon>
        <taxon>Pseudomonadaceae</taxon>
        <taxon>Pseudomonas</taxon>
    </lineage>
</organism>
<reference key="1">
    <citation type="journal article" date="2009" name="Genome Res.">
        <title>Newly introduced genomic prophage islands are critical determinants of in vivo competitiveness in the Liverpool epidemic strain of Pseudomonas aeruginosa.</title>
        <authorList>
            <person name="Winstanley C."/>
            <person name="Langille M.G.I."/>
            <person name="Fothergill J.L."/>
            <person name="Kukavica-Ibrulj I."/>
            <person name="Paradis-Bleau C."/>
            <person name="Sanschagrin F."/>
            <person name="Thomson N.R."/>
            <person name="Winsor G.L."/>
            <person name="Quail M.A."/>
            <person name="Lennard N."/>
            <person name="Bignell A."/>
            <person name="Clarke L."/>
            <person name="Seeger K."/>
            <person name="Saunders D."/>
            <person name="Harris D."/>
            <person name="Parkhill J."/>
            <person name="Hancock R.E.W."/>
            <person name="Brinkman F.S.L."/>
            <person name="Levesque R.C."/>
        </authorList>
    </citation>
    <scope>NUCLEOTIDE SEQUENCE [LARGE SCALE GENOMIC DNA]</scope>
    <source>
        <strain>LESB58</strain>
    </source>
</reference>
<evidence type="ECO:0000255" key="1">
    <source>
        <dbReference type="HAMAP-Rule" id="MF_00167"/>
    </source>
</evidence>
<accession>B7UY29</accession>
<feature type="chain" id="PRO_1000118240" description="Translational regulator CsrA">
    <location>
        <begin position="1"/>
        <end position="61"/>
    </location>
</feature>
<name>CSRA_PSEA8</name>
<proteinExistence type="inferred from homology"/>
<keyword id="KW-0010">Activator</keyword>
<keyword id="KW-0963">Cytoplasm</keyword>
<keyword id="KW-0678">Repressor</keyword>
<keyword id="KW-0694">RNA-binding</keyword>
<keyword id="KW-0810">Translation regulation</keyword>
<gene>
    <name evidence="1" type="primary">csrA</name>
    <name type="ordered locus">PLES_44111</name>
</gene>
<dbReference type="EMBL" id="FM209186">
    <property type="protein sequence ID" value="CAW29166.1"/>
    <property type="molecule type" value="Genomic_DNA"/>
</dbReference>
<dbReference type="RefSeq" id="WP_003085981.1">
    <property type="nucleotide sequence ID" value="NC_011770.1"/>
</dbReference>
<dbReference type="SMR" id="B7UY29"/>
<dbReference type="GeneID" id="79915115"/>
<dbReference type="KEGG" id="pag:PLES_44111"/>
<dbReference type="HOGENOM" id="CLU_164837_2_1_6"/>
<dbReference type="GO" id="GO:0005829">
    <property type="term" value="C:cytosol"/>
    <property type="evidence" value="ECO:0007669"/>
    <property type="project" value="TreeGrafter"/>
</dbReference>
<dbReference type="GO" id="GO:0048027">
    <property type="term" value="F:mRNA 5'-UTR binding"/>
    <property type="evidence" value="ECO:0007669"/>
    <property type="project" value="UniProtKB-UniRule"/>
</dbReference>
<dbReference type="GO" id="GO:0006402">
    <property type="term" value="P:mRNA catabolic process"/>
    <property type="evidence" value="ECO:0007669"/>
    <property type="project" value="InterPro"/>
</dbReference>
<dbReference type="GO" id="GO:0045947">
    <property type="term" value="P:negative regulation of translational initiation"/>
    <property type="evidence" value="ECO:0007669"/>
    <property type="project" value="UniProtKB-UniRule"/>
</dbReference>
<dbReference type="GO" id="GO:0045948">
    <property type="term" value="P:positive regulation of translational initiation"/>
    <property type="evidence" value="ECO:0007669"/>
    <property type="project" value="UniProtKB-UniRule"/>
</dbReference>
<dbReference type="GO" id="GO:0006109">
    <property type="term" value="P:regulation of carbohydrate metabolic process"/>
    <property type="evidence" value="ECO:0007669"/>
    <property type="project" value="UniProtKB-UniRule"/>
</dbReference>
<dbReference type="FunFam" id="2.60.40.4380:FF:000001">
    <property type="entry name" value="Translational regulator CsrA"/>
    <property type="match status" value="1"/>
</dbReference>
<dbReference type="Gene3D" id="2.60.40.4380">
    <property type="entry name" value="Translational regulator CsrA"/>
    <property type="match status" value="1"/>
</dbReference>
<dbReference type="HAMAP" id="MF_00167">
    <property type="entry name" value="CsrA"/>
    <property type="match status" value="1"/>
</dbReference>
<dbReference type="InterPro" id="IPR003751">
    <property type="entry name" value="CsrA"/>
</dbReference>
<dbReference type="InterPro" id="IPR036107">
    <property type="entry name" value="CsrA_sf"/>
</dbReference>
<dbReference type="NCBIfam" id="TIGR00202">
    <property type="entry name" value="csrA"/>
    <property type="match status" value="1"/>
</dbReference>
<dbReference type="NCBIfam" id="NF002469">
    <property type="entry name" value="PRK01712.1"/>
    <property type="match status" value="1"/>
</dbReference>
<dbReference type="PANTHER" id="PTHR34984">
    <property type="entry name" value="CARBON STORAGE REGULATOR"/>
    <property type="match status" value="1"/>
</dbReference>
<dbReference type="PANTHER" id="PTHR34984:SF1">
    <property type="entry name" value="CARBON STORAGE REGULATOR"/>
    <property type="match status" value="1"/>
</dbReference>
<dbReference type="Pfam" id="PF02599">
    <property type="entry name" value="CsrA"/>
    <property type="match status" value="1"/>
</dbReference>
<dbReference type="SUPFAM" id="SSF117130">
    <property type="entry name" value="CsrA-like"/>
    <property type="match status" value="1"/>
</dbReference>
<protein>
    <recommendedName>
        <fullName evidence="1">Translational regulator CsrA</fullName>
    </recommendedName>
    <alternativeName>
        <fullName evidence="1">Carbon storage regulator</fullName>
    </alternativeName>
</protein>
<comment type="function">
    <text evidence="1">A key translational regulator that binds mRNA to regulate translation initiation and/or mRNA stability. Mediates global changes in gene expression, shifting from rapid growth to stress survival by linking envelope stress, the stringent response and the catabolite repression systems. Usually binds in the 5'-UTR; binding at or near the Shine-Dalgarno sequence prevents ribosome-binding, repressing translation, binding elsewhere in the 5'-UTR can activate translation and/or stabilize the mRNA. Its function is antagonized by small RNA(s).</text>
</comment>
<comment type="subunit">
    <text evidence="1">Homodimer; the beta-strands of each monomer intercalate to form a hydrophobic core, while the alpha-helices form wings that extend away from the core.</text>
</comment>
<comment type="subcellular location">
    <subcellularLocation>
        <location evidence="1">Cytoplasm</location>
    </subcellularLocation>
</comment>
<comment type="similarity">
    <text evidence="1">Belongs to the CsrA/RsmA family.</text>
</comment>